<evidence type="ECO:0000269" key="1">
    <source>
    </source>
</evidence>
<evidence type="ECO:0000269" key="2">
    <source ref="1"/>
</evidence>
<evidence type="ECO:0000305" key="3"/>
<organism evidence="3">
    <name type="scientific">Prorocentrum triestinum</name>
    <name type="common">Red tide alga</name>
    <dbReference type="NCBI Taxonomy" id="39450"/>
    <lineage>
        <taxon>Eukaryota</taxon>
        <taxon>Sar</taxon>
        <taxon>Alveolata</taxon>
        <taxon>Dinophyceae</taxon>
        <taxon>Prorocentrales</taxon>
        <taxon>Prorocentraceae</taxon>
        <taxon>Prorocentrum</taxon>
    </lineage>
</organism>
<keyword id="KW-0131">Cell cycle</keyword>
<keyword id="KW-0132">Cell division</keyword>
<keyword id="KW-0903">Direct protein sequencing</keyword>
<sequence length="15" mass="1736">AEYDVSDADIEAFYQ</sequence>
<proteinExistence type="evidence at protein level"/>
<reference evidence="3" key="1">
    <citation type="thesis" date="2004" institute="The Hong Kong Polytechnic University" country="Hong Kong">
        <title>Proteomic approach to characterize differential protein expression in toxic and harmful algal bloom species (HABs).</title>
        <authorList>
            <person name="Chan L.L."/>
        </authorList>
    </citation>
    <scope>PROTEIN SEQUENCE</scope>
    <scope>DEVELOPMENTAL STAGE</scope>
    <source>
        <strain evidence="3">Hong Kong</strain>
    </source>
</reference>
<reference key="2">
    <citation type="journal article" date="2004" name="Proteomics">
        <title>Proteomic study of a model causative agent of harmful algal blooms, Prorocentrum triestinum II: the use of differentially expressed protein profiles under different growth phases and growth conditions for bloom prediction.</title>
        <authorList>
            <person name="Chan L.L."/>
            <person name="Hodgkiss I.J."/>
            <person name="Wan J.M.-F."/>
            <person name="Lum J.H.-K."/>
            <person name="Mak A.S.-C."/>
            <person name="Sit W.-H."/>
            <person name="Lo S.C.-L."/>
        </authorList>
    </citation>
    <scope>PROTEIN SEQUENCE</scope>
    <scope>DEVELOPMENTAL STAGE</scope>
    <source>
        <strain>Hong Kong</strain>
    </source>
</reference>
<name>PB1_PROTR</name>
<dbReference type="GO" id="GO:0051301">
    <property type="term" value="P:cell division"/>
    <property type="evidence" value="ECO:0007669"/>
    <property type="project" value="UniProtKB-KW"/>
</dbReference>
<protein>
    <recommendedName>
        <fullName>Preblooming protein 1</fullName>
        <shortName>PB1</shortName>
    </recommendedName>
</protein>
<accession>P83764</accession>
<comment type="function">
    <text evidence="3">Possible mediator for cell division in the blooming process.</text>
</comment>
<comment type="developmental stage">
    <text evidence="1 2 3">Appears in the preblooming stage (G0/G1) of the algal life cycle and remains in the blooming stage (S and G2/M).</text>
</comment>
<comment type="miscellaneous">
    <text evidence="3">On the 2D-gel the determined pI of this protein is: 6.0, its MW is: 21.5 kDa.</text>
</comment>
<feature type="chain" id="PRO_0000058239" description="Preblooming protein 1">
    <location>
        <begin position="1"/>
        <end position="15" status="greater than"/>
    </location>
</feature>
<feature type="non-terminal residue" evidence="3">
    <location>
        <position position="15"/>
    </location>
</feature>